<name>ACY1_MOUSE</name>
<proteinExistence type="evidence at protein level"/>
<reference key="1">
    <citation type="journal article" date="2005" name="Science">
        <title>The transcriptional landscape of the mammalian genome.</title>
        <authorList>
            <person name="Carninci P."/>
            <person name="Kasukawa T."/>
            <person name="Katayama S."/>
            <person name="Gough J."/>
            <person name="Frith M.C."/>
            <person name="Maeda N."/>
            <person name="Oyama R."/>
            <person name="Ravasi T."/>
            <person name="Lenhard B."/>
            <person name="Wells C."/>
            <person name="Kodzius R."/>
            <person name="Shimokawa K."/>
            <person name="Bajic V.B."/>
            <person name="Brenner S.E."/>
            <person name="Batalov S."/>
            <person name="Forrest A.R."/>
            <person name="Zavolan M."/>
            <person name="Davis M.J."/>
            <person name="Wilming L.G."/>
            <person name="Aidinis V."/>
            <person name="Allen J.E."/>
            <person name="Ambesi-Impiombato A."/>
            <person name="Apweiler R."/>
            <person name="Aturaliya R.N."/>
            <person name="Bailey T.L."/>
            <person name="Bansal M."/>
            <person name="Baxter L."/>
            <person name="Beisel K.W."/>
            <person name="Bersano T."/>
            <person name="Bono H."/>
            <person name="Chalk A.M."/>
            <person name="Chiu K.P."/>
            <person name="Choudhary V."/>
            <person name="Christoffels A."/>
            <person name="Clutterbuck D.R."/>
            <person name="Crowe M.L."/>
            <person name="Dalla E."/>
            <person name="Dalrymple B.P."/>
            <person name="de Bono B."/>
            <person name="Della Gatta G."/>
            <person name="di Bernardo D."/>
            <person name="Down T."/>
            <person name="Engstrom P."/>
            <person name="Fagiolini M."/>
            <person name="Faulkner G."/>
            <person name="Fletcher C.F."/>
            <person name="Fukushima T."/>
            <person name="Furuno M."/>
            <person name="Futaki S."/>
            <person name="Gariboldi M."/>
            <person name="Georgii-Hemming P."/>
            <person name="Gingeras T.R."/>
            <person name="Gojobori T."/>
            <person name="Green R.E."/>
            <person name="Gustincich S."/>
            <person name="Harbers M."/>
            <person name="Hayashi Y."/>
            <person name="Hensch T.K."/>
            <person name="Hirokawa N."/>
            <person name="Hill D."/>
            <person name="Huminiecki L."/>
            <person name="Iacono M."/>
            <person name="Ikeo K."/>
            <person name="Iwama A."/>
            <person name="Ishikawa T."/>
            <person name="Jakt M."/>
            <person name="Kanapin A."/>
            <person name="Katoh M."/>
            <person name="Kawasawa Y."/>
            <person name="Kelso J."/>
            <person name="Kitamura H."/>
            <person name="Kitano H."/>
            <person name="Kollias G."/>
            <person name="Krishnan S.P."/>
            <person name="Kruger A."/>
            <person name="Kummerfeld S.K."/>
            <person name="Kurochkin I.V."/>
            <person name="Lareau L.F."/>
            <person name="Lazarevic D."/>
            <person name="Lipovich L."/>
            <person name="Liu J."/>
            <person name="Liuni S."/>
            <person name="McWilliam S."/>
            <person name="Madan Babu M."/>
            <person name="Madera M."/>
            <person name="Marchionni L."/>
            <person name="Matsuda H."/>
            <person name="Matsuzawa S."/>
            <person name="Miki H."/>
            <person name="Mignone F."/>
            <person name="Miyake S."/>
            <person name="Morris K."/>
            <person name="Mottagui-Tabar S."/>
            <person name="Mulder N."/>
            <person name="Nakano N."/>
            <person name="Nakauchi H."/>
            <person name="Ng P."/>
            <person name="Nilsson R."/>
            <person name="Nishiguchi S."/>
            <person name="Nishikawa S."/>
            <person name="Nori F."/>
            <person name="Ohara O."/>
            <person name="Okazaki Y."/>
            <person name="Orlando V."/>
            <person name="Pang K.C."/>
            <person name="Pavan W.J."/>
            <person name="Pavesi G."/>
            <person name="Pesole G."/>
            <person name="Petrovsky N."/>
            <person name="Piazza S."/>
            <person name="Reed J."/>
            <person name="Reid J.F."/>
            <person name="Ring B.Z."/>
            <person name="Ringwald M."/>
            <person name="Rost B."/>
            <person name="Ruan Y."/>
            <person name="Salzberg S.L."/>
            <person name="Sandelin A."/>
            <person name="Schneider C."/>
            <person name="Schoenbach C."/>
            <person name="Sekiguchi K."/>
            <person name="Semple C.A."/>
            <person name="Seno S."/>
            <person name="Sessa L."/>
            <person name="Sheng Y."/>
            <person name="Shibata Y."/>
            <person name="Shimada H."/>
            <person name="Shimada K."/>
            <person name="Silva D."/>
            <person name="Sinclair B."/>
            <person name="Sperling S."/>
            <person name="Stupka E."/>
            <person name="Sugiura K."/>
            <person name="Sultana R."/>
            <person name="Takenaka Y."/>
            <person name="Taki K."/>
            <person name="Tammoja K."/>
            <person name="Tan S.L."/>
            <person name="Tang S."/>
            <person name="Taylor M.S."/>
            <person name="Tegner J."/>
            <person name="Teichmann S.A."/>
            <person name="Ueda H.R."/>
            <person name="van Nimwegen E."/>
            <person name="Verardo R."/>
            <person name="Wei C.L."/>
            <person name="Yagi K."/>
            <person name="Yamanishi H."/>
            <person name="Zabarovsky E."/>
            <person name="Zhu S."/>
            <person name="Zimmer A."/>
            <person name="Hide W."/>
            <person name="Bult C."/>
            <person name="Grimmond S.M."/>
            <person name="Teasdale R.D."/>
            <person name="Liu E.T."/>
            <person name="Brusic V."/>
            <person name="Quackenbush J."/>
            <person name="Wahlestedt C."/>
            <person name="Mattick J.S."/>
            <person name="Hume D.A."/>
            <person name="Kai C."/>
            <person name="Sasaki D."/>
            <person name="Tomaru Y."/>
            <person name="Fukuda S."/>
            <person name="Kanamori-Katayama M."/>
            <person name="Suzuki M."/>
            <person name="Aoki J."/>
            <person name="Arakawa T."/>
            <person name="Iida J."/>
            <person name="Imamura K."/>
            <person name="Itoh M."/>
            <person name="Kato T."/>
            <person name="Kawaji H."/>
            <person name="Kawagashira N."/>
            <person name="Kawashima T."/>
            <person name="Kojima M."/>
            <person name="Kondo S."/>
            <person name="Konno H."/>
            <person name="Nakano K."/>
            <person name="Ninomiya N."/>
            <person name="Nishio T."/>
            <person name="Okada M."/>
            <person name="Plessy C."/>
            <person name="Shibata K."/>
            <person name="Shiraki T."/>
            <person name="Suzuki S."/>
            <person name="Tagami M."/>
            <person name="Waki K."/>
            <person name="Watahiki A."/>
            <person name="Okamura-Oho Y."/>
            <person name="Suzuki H."/>
            <person name="Kawai J."/>
            <person name="Hayashizaki Y."/>
        </authorList>
    </citation>
    <scope>NUCLEOTIDE SEQUENCE [LARGE SCALE MRNA]</scope>
    <source>
        <strain>C57BL/6J</strain>
        <tissue>Embryo</tissue>
        <tissue>Kidney</tissue>
    </source>
</reference>
<reference key="2">
    <citation type="journal article" date="2004" name="Genome Res.">
        <title>The status, quality, and expansion of the NIH full-length cDNA project: the Mammalian Gene Collection (MGC).</title>
        <authorList>
            <consortium name="The MGC Project Team"/>
        </authorList>
    </citation>
    <scope>NUCLEOTIDE SEQUENCE [LARGE SCALE MRNA]</scope>
    <source>
        <strain>FVB/N</strain>
        <tissue>Mammary tumor</tissue>
    </source>
</reference>
<reference key="3">
    <citation type="journal article" date="2004" name="FEBS Lett.">
        <title>Aminoacylase 1 is a sphingosine kinase 1-interacting protein.</title>
        <authorList>
            <person name="Maceyka M."/>
            <person name="Nava V.E."/>
            <person name="Milstien S."/>
            <person name="Spiegel S."/>
        </authorList>
    </citation>
    <scope>INTERACTION WITH SPHK1</scope>
</reference>
<reference key="4">
    <citation type="journal article" date="2010" name="Cell">
        <title>A tissue-specific atlas of mouse protein phosphorylation and expression.</title>
        <authorList>
            <person name="Huttlin E.L."/>
            <person name="Jedrychowski M.P."/>
            <person name="Elias J.E."/>
            <person name="Goswami T."/>
            <person name="Rad R."/>
            <person name="Beausoleil S.A."/>
            <person name="Villen J."/>
            <person name="Haas W."/>
            <person name="Sowa M.E."/>
            <person name="Gygi S.P."/>
        </authorList>
    </citation>
    <scope>IDENTIFICATION BY MASS SPECTROMETRY [LARGE SCALE ANALYSIS]</scope>
    <source>
        <tissue>Brain</tissue>
        <tissue>Heart</tissue>
        <tissue>Kidney</tissue>
        <tissue>Liver</tissue>
        <tissue>Lung</tissue>
        <tissue>Pancreas</tissue>
        <tissue>Spleen</tissue>
        <tissue>Testis</tissue>
    </source>
</reference>
<reference key="5">
    <citation type="journal article" date="2019" name="Cell Chem. Biol.">
        <title>Family-wide Annotation of Enzymatic Pathways by Parallel In Vivo Metabolomics.</title>
        <authorList>
            <person name="Kim J.T."/>
            <person name="Li V.L."/>
            <person name="Terrell S.M."/>
            <person name="Fischer C.R."/>
            <person name="Long J.Z."/>
        </authorList>
    </citation>
    <scope>FUNCTION</scope>
    <scope>CATALYTIC ACTIVITY</scope>
</reference>
<evidence type="ECO:0000250" key="1"/>
<evidence type="ECO:0000250" key="2">
    <source>
        <dbReference type="UniProtKB" id="Q03154"/>
    </source>
</evidence>
<evidence type="ECO:0000269" key="3">
    <source>
    </source>
</evidence>
<evidence type="ECO:0000269" key="4">
    <source>
    </source>
</evidence>
<evidence type="ECO:0000305" key="5"/>
<accession>Q99JW2</accession>
<accession>Q9CR15</accession>
<comment type="function">
    <text evidence="4">Catalyzes the hydrolysis of N-acetylated amino acids to acetate and free amino acids.</text>
</comment>
<comment type="catalytic activity">
    <reaction evidence="4">
        <text>an N-acyl-L-amino acid + H2O = an L-alpha-amino acid + a carboxylate</text>
        <dbReference type="Rhea" id="RHEA:15565"/>
        <dbReference type="ChEBI" id="CHEBI:15377"/>
        <dbReference type="ChEBI" id="CHEBI:29067"/>
        <dbReference type="ChEBI" id="CHEBI:59869"/>
        <dbReference type="ChEBI" id="CHEBI:59874"/>
        <dbReference type="EC" id="3.5.1.14"/>
    </reaction>
    <physiologicalReaction direction="left-to-right" evidence="4">
        <dbReference type="Rhea" id="RHEA:15566"/>
    </physiologicalReaction>
</comment>
<comment type="catalytic activity">
    <reaction evidence="2">
        <text>N-acetyl-L-methionine + H2O = L-methionine + acetate</text>
        <dbReference type="Rhea" id="RHEA:67440"/>
        <dbReference type="ChEBI" id="CHEBI:15377"/>
        <dbReference type="ChEBI" id="CHEBI:30089"/>
        <dbReference type="ChEBI" id="CHEBI:57844"/>
        <dbReference type="ChEBI" id="CHEBI:71670"/>
    </reaction>
    <physiologicalReaction direction="left-to-right" evidence="2">
        <dbReference type="Rhea" id="RHEA:67441"/>
    </physiologicalReaction>
</comment>
<comment type="catalytic activity">
    <reaction evidence="4">
        <text>N-acetyl-L-glutamine + H2O = L-glutamine + acetate</text>
        <dbReference type="Rhea" id="RHEA:67368"/>
        <dbReference type="ChEBI" id="CHEBI:15377"/>
        <dbReference type="ChEBI" id="CHEBI:30089"/>
        <dbReference type="ChEBI" id="CHEBI:58359"/>
        <dbReference type="ChEBI" id="CHEBI:143879"/>
    </reaction>
    <physiologicalReaction direction="left-to-right" evidence="4">
        <dbReference type="Rhea" id="RHEA:67369"/>
    </physiologicalReaction>
</comment>
<comment type="cofactor">
    <cofactor evidence="2">
        <name>Zn(2+)</name>
        <dbReference type="ChEBI" id="CHEBI:29105"/>
    </cofactor>
    <text evidence="2">Binds 2 Zn(2+) ions per subunit.</text>
</comment>
<comment type="subunit">
    <text evidence="1 3">Homodimer (By similarity). Interacts with SPHK1.</text>
</comment>
<comment type="subcellular location">
    <subcellularLocation>
        <location evidence="1">Cytoplasm</location>
    </subcellularLocation>
</comment>
<comment type="similarity">
    <text evidence="5">Belongs to the peptidase M20A family.</text>
</comment>
<keyword id="KW-0963">Cytoplasm</keyword>
<keyword id="KW-0378">Hydrolase</keyword>
<keyword id="KW-0479">Metal-binding</keyword>
<keyword id="KW-1185">Reference proteome</keyword>
<keyword id="KW-0862">Zinc</keyword>
<gene>
    <name type="primary">Acy1</name>
</gene>
<organism>
    <name type="scientific">Mus musculus</name>
    <name type="common">Mouse</name>
    <dbReference type="NCBI Taxonomy" id="10090"/>
    <lineage>
        <taxon>Eukaryota</taxon>
        <taxon>Metazoa</taxon>
        <taxon>Chordata</taxon>
        <taxon>Craniata</taxon>
        <taxon>Vertebrata</taxon>
        <taxon>Euteleostomi</taxon>
        <taxon>Mammalia</taxon>
        <taxon>Eutheria</taxon>
        <taxon>Euarchontoglires</taxon>
        <taxon>Glires</taxon>
        <taxon>Rodentia</taxon>
        <taxon>Myomorpha</taxon>
        <taxon>Muroidea</taxon>
        <taxon>Muridae</taxon>
        <taxon>Murinae</taxon>
        <taxon>Mus</taxon>
        <taxon>Mus</taxon>
    </lineage>
</organism>
<sequence length="408" mass="45781">MTTKDPESEHPSVTLFRQYLRICTVQPNPDYGGAITFLEERARQLGLSCQKIEVVPGFVITVLTWPGTNPSLPSILLNSHTDVVPVFKEHWHHDPFEAFKDSEGYIYARGSQDMKSVSIQYLEAVRRLKSEGHRFPRTIHMTFVPDEEVGGHKGMELFVKRPEFQALRAGFALDEGLANPTDAFTVFYSERSPWWVRVTSTGKPGHASRFIEDTAAEKLHKVISSILAFREKERQRLQANPHLKEGAVTSVNLTKLEGGVAYNVVPATMSASFDFRVAPDVDMKAFEKQLQRWCQEAGEGVTFEFAQKFTEPRMTPTDDSDPWWAAFSGACKAMNLTLEPEIFPAATDSRYIRAVGIPALGFSPMNRTPVLLHDHNERLHEDIFLRGVDIYTGLLSALASVPTLPGES</sequence>
<feature type="chain" id="PRO_0000274007" description="Aminoacylase-1">
    <location>
        <begin position="1"/>
        <end position="408"/>
    </location>
</feature>
<feature type="active site" evidence="1">
    <location>
        <position position="82"/>
    </location>
</feature>
<feature type="active site" description="Proton acceptor" evidence="1">
    <location>
        <position position="147"/>
    </location>
</feature>
<feature type="binding site" evidence="2">
    <location>
        <position position="80"/>
    </location>
    <ligand>
        <name>Zn(2+)</name>
        <dbReference type="ChEBI" id="CHEBI:29105"/>
        <label>1</label>
    </ligand>
</feature>
<feature type="binding site" evidence="2">
    <location>
        <position position="113"/>
    </location>
    <ligand>
        <name>Zn(2+)</name>
        <dbReference type="ChEBI" id="CHEBI:29105"/>
        <label>1</label>
    </ligand>
</feature>
<feature type="binding site" evidence="2">
    <location>
        <position position="113"/>
    </location>
    <ligand>
        <name>Zn(2+)</name>
        <dbReference type="ChEBI" id="CHEBI:29105"/>
        <label>2</label>
    </ligand>
</feature>
<feature type="binding site" evidence="2">
    <location>
        <position position="148"/>
    </location>
    <ligand>
        <name>Zn(2+)</name>
        <dbReference type="ChEBI" id="CHEBI:29105"/>
        <label>2</label>
    </ligand>
</feature>
<feature type="binding site" evidence="2">
    <location>
        <position position="175"/>
    </location>
    <ligand>
        <name>Zn(2+)</name>
        <dbReference type="ChEBI" id="CHEBI:29105"/>
        <label>1</label>
    </ligand>
</feature>
<feature type="binding site" evidence="2">
    <location>
        <position position="373"/>
    </location>
    <ligand>
        <name>Zn(2+)</name>
        <dbReference type="ChEBI" id="CHEBI:29105"/>
        <label>2</label>
    </ligand>
</feature>
<feature type="sequence conflict" description="In Ref. 1; BAB22090/BAB22948." evidence="5" ref="1">
    <original>A</original>
    <variation>V</variation>
    <location>
        <position position="172"/>
    </location>
</feature>
<feature type="sequence conflict" description="In Ref. 1; BAB22090/BAB22948." evidence="5" ref="1">
    <original>R</original>
    <variation>Q</variation>
    <location>
        <position position="197"/>
    </location>
</feature>
<feature type="sequence conflict" description="In Ref. 1; BAB22090/BAB22948." evidence="5" ref="1">
    <original>Y</original>
    <variation>F</variation>
    <location>
        <position position="351"/>
    </location>
</feature>
<feature type="sequence conflict" description="In Ref. 1; BAB22090/BAB22948." evidence="5" ref="1">
    <original>G</original>
    <variation>S</variation>
    <location>
        <position position="406"/>
    </location>
</feature>
<protein>
    <recommendedName>
        <fullName>Aminoacylase-1</fullName>
        <shortName>ACY-1</shortName>
        <ecNumber evidence="4">3.5.1.14</ecNumber>
    </recommendedName>
    <alternativeName>
        <fullName>N-acyl-L-amino-acid amidohydrolase</fullName>
    </alternativeName>
</protein>
<dbReference type="EC" id="3.5.1.14" evidence="4"/>
<dbReference type="EMBL" id="AK003703">
    <property type="protein sequence ID" value="BAB22948.1"/>
    <property type="molecule type" value="mRNA"/>
</dbReference>
<dbReference type="EMBL" id="AK002423">
    <property type="protein sequence ID" value="BAB22090.1"/>
    <property type="molecule type" value="mRNA"/>
</dbReference>
<dbReference type="EMBL" id="BC005631">
    <property type="protein sequence ID" value="AAH05631.1"/>
    <property type="molecule type" value="mRNA"/>
</dbReference>
<dbReference type="CCDS" id="CCDS23477.1"/>
<dbReference type="RefSeq" id="NP_001263371.1">
    <property type="nucleotide sequence ID" value="NM_001276442.1"/>
</dbReference>
<dbReference type="RefSeq" id="NP_079647.1">
    <property type="nucleotide sequence ID" value="NM_025371.3"/>
</dbReference>
<dbReference type="SMR" id="Q99JW2"/>
<dbReference type="BioGRID" id="224933">
    <property type="interactions" value="2"/>
</dbReference>
<dbReference type="FunCoup" id="Q99JW2">
    <property type="interactions" value="156"/>
</dbReference>
<dbReference type="IntAct" id="Q99JW2">
    <property type="interactions" value="1"/>
</dbReference>
<dbReference type="STRING" id="10090.ENSMUSP00000024031"/>
<dbReference type="MEROPS" id="M20.973"/>
<dbReference type="GlyGen" id="Q99JW2">
    <property type="glycosylation" value="2 sites, 1 N-linked glycan (1 site), 1 O-linked glycan (1 site)"/>
</dbReference>
<dbReference type="iPTMnet" id="Q99JW2"/>
<dbReference type="MetOSite" id="Q99JW2"/>
<dbReference type="PhosphoSitePlus" id="Q99JW2"/>
<dbReference type="REPRODUCTION-2DPAGE" id="Q99JW2"/>
<dbReference type="jPOST" id="Q99JW2"/>
<dbReference type="PaxDb" id="10090-ENSMUSP00000024031"/>
<dbReference type="PeptideAtlas" id="Q99JW2"/>
<dbReference type="ProteomicsDB" id="281934"/>
<dbReference type="Pumba" id="Q99JW2"/>
<dbReference type="DNASU" id="109652"/>
<dbReference type="GeneID" id="109652"/>
<dbReference type="KEGG" id="mmu:109652"/>
<dbReference type="UCSC" id="uc009rjp.2">
    <property type="organism name" value="mouse"/>
</dbReference>
<dbReference type="AGR" id="MGI:87913"/>
<dbReference type="CTD" id="95"/>
<dbReference type="MGI" id="MGI:87913">
    <property type="gene designation" value="Acy1"/>
</dbReference>
<dbReference type="eggNOG" id="KOG2275">
    <property type="taxonomic scope" value="Eukaryota"/>
</dbReference>
<dbReference type="InParanoid" id="Q99JW2"/>
<dbReference type="OrthoDB" id="3064516at2759"/>
<dbReference type="PhylomeDB" id="Q99JW2"/>
<dbReference type="TreeFam" id="TF313693"/>
<dbReference type="BRENDA" id="3.5.1.14">
    <property type="organism ID" value="3474"/>
</dbReference>
<dbReference type="Reactome" id="R-MMU-5423646">
    <property type="pathway name" value="Aflatoxin activation and detoxification"/>
</dbReference>
<dbReference type="Reactome" id="R-MMU-9753281">
    <property type="pathway name" value="Paracetamol ADME"/>
</dbReference>
<dbReference type="BioGRID-ORCS" id="109652">
    <property type="hits" value="5 hits in 76 CRISPR screens"/>
</dbReference>
<dbReference type="PRO" id="PR:Q99JW2"/>
<dbReference type="Proteomes" id="UP000000589">
    <property type="component" value="Unplaced"/>
</dbReference>
<dbReference type="RNAct" id="Q99JW2">
    <property type="molecule type" value="protein"/>
</dbReference>
<dbReference type="GO" id="GO:0005737">
    <property type="term" value="C:cytoplasm"/>
    <property type="evidence" value="ECO:0007669"/>
    <property type="project" value="UniProtKB-SubCell"/>
</dbReference>
<dbReference type="GO" id="GO:0004046">
    <property type="term" value="F:aminoacylase activity"/>
    <property type="evidence" value="ECO:0007669"/>
    <property type="project" value="UniProtKB-EC"/>
</dbReference>
<dbReference type="GO" id="GO:0046872">
    <property type="term" value="F:metal ion binding"/>
    <property type="evidence" value="ECO:0007669"/>
    <property type="project" value="UniProtKB-KW"/>
</dbReference>
<dbReference type="GO" id="GO:0006520">
    <property type="term" value="P:amino acid metabolic process"/>
    <property type="evidence" value="ECO:0007669"/>
    <property type="project" value="InterPro"/>
</dbReference>
<dbReference type="CDD" id="cd05646">
    <property type="entry name" value="M20_AcylaseI_like"/>
    <property type="match status" value="1"/>
</dbReference>
<dbReference type="FunFam" id="3.40.630.10:FF:000019">
    <property type="entry name" value="Aminoacylase 1"/>
    <property type="match status" value="1"/>
</dbReference>
<dbReference type="FunFam" id="1.10.150.900:FF:000001">
    <property type="entry name" value="Aminoacylase-1, putative"/>
    <property type="match status" value="1"/>
</dbReference>
<dbReference type="FunFam" id="3.30.70.360:FF:000005">
    <property type="entry name" value="Putative Aminoacylase-1"/>
    <property type="match status" value="1"/>
</dbReference>
<dbReference type="Gene3D" id="1.10.150.900">
    <property type="match status" value="1"/>
</dbReference>
<dbReference type="Gene3D" id="3.30.70.360">
    <property type="match status" value="1"/>
</dbReference>
<dbReference type="Gene3D" id="3.40.630.10">
    <property type="entry name" value="Zn peptidases"/>
    <property type="match status" value="1"/>
</dbReference>
<dbReference type="InterPro" id="IPR052083">
    <property type="entry name" value="Aminoacylase-1_M20A"/>
</dbReference>
<dbReference type="InterPro" id="IPR001261">
    <property type="entry name" value="ArgE/DapE_CS"/>
</dbReference>
<dbReference type="InterPro" id="IPR036264">
    <property type="entry name" value="Bact_exopeptidase_dim_dom"/>
</dbReference>
<dbReference type="InterPro" id="IPR010159">
    <property type="entry name" value="N-acyl_aa_amidohydrolase"/>
</dbReference>
<dbReference type="InterPro" id="IPR002933">
    <property type="entry name" value="Peptidase_M20"/>
</dbReference>
<dbReference type="InterPro" id="IPR011650">
    <property type="entry name" value="Peptidase_M20_dimer"/>
</dbReference>
<dbReference type="NCBIfam" id="TIGR01880">
    <property type="entry name" value="Ac-peptdase-euk"/>
    <property type="match status" value="1"/>
</dbReference>
<dbReference type="PANTHER" id="PTHR45892">
    <property type="entry name" value="AMINOACYLASE-1"/>
    <property type="match status" value="1"/>
</dbReference>
<dbReference type="PANTHER" id="PTHR45892:SF1">
    <property type="entry name" value="AMINOACYLASE-1"/>
    <property type="match status" value="1"/>
</dbReference>
<dbReference type="Pfam" id="PF07687">
    <property type="entry name" value="M20_dimer"/>
    <property type="match status" value="1"/>
</dbReference>
<dbReference type="Pfam" id="PF01546">
    <property type="entry name" value="Peptidase_M20"/>
    <property type="match status" value="1"/>
</dbReference>
<dbReference type="PIRSF" id="PIRSF036696">
    <property type="entry name" value="ACY-1"/>
    <property type="match status" value="1"/>
</dbReference>
<dbReference type="SUPFAM" id="SSF55031">
    <property type="entry name" value="Bacterial exopeptidase dimerisation domain"/>
    <property type="match status" value="1"/>
</dbReference>
<dbReference type="SUPFAM" id="SSF53187">
    <property type="entry name" value="Zn-dependent exopeptidases"/>
    <property type="match status" value="1"/>
</dbReference>
<dbReference type="PROSITE" id="PS00758">
    <property type="entry name" value="ARGE_DAPE_CPG2_1"/>
    <property type="match status" value="1"/>
</dbReference>
<dbReference type="PROSITE" id="PS00759">
    <property type="entry name" value="ARGE_DAPE_CPG2_2"/>
    <property type="match status" value="1"/>
</dbReference>